<name>PHS_VIBC3</name>
<protein>
    <recommendedName>
        <fullName evidence="1">Putative pterin-4-alpha-carbinolamine dehydratase</fullName>
        <shortName evidence="1">PHS</shortName>
        <ecNumber evidence="1">4.2.1.96</ecNumber>
    </recommendedName>
    <alternativeName>
        <fullName evidence="1">4-alpha-hydroxy-tetrahydropterin dehydratase</fullName>
    </alternativeName>
    <alternativeName>
        <fullName evidence="1">Pterin carbinolamine dehydratase</fullName>
        <shortName evidence="1">PCD</shortName>
    </alternativeName>
</protein>
<dbReference type="EC" id="4.2.1.96" evidence="1"/>
<dbReference type="EMBL" id="CP000626">
    <property type="protein sequence ID" value="ABQ19317.1"/>
    <property type="molecule type" value="Genomic_DNA"/>
</dbReference>
<dbReference type="EMBL" id="CP001236">
    <property type="protein sequence ID" value="ACP11684.1"/>
    <property type="molecule type" value="Genomic_DNA"/>
</dbReference>
<dbReference type="RefSeq" id="WP_000883445.1">
    <property type="nucleotide sequence ID" value="NZ_JAACZH010000012.1"/>
</dbReference>
<dbReference type="SMR" id="A5F0J0"/>
<dbReference type="KEGG" id="vco:VC0395_0408"/>
<dbReference type="KEGG" id="vcr:VC395_A0851"/>
<dbReference type="PATRIC" id="fig|345073.21.peg.3581"/>
<dbReference type="eggNOG" id="COG2154">
    <property type="taxonomic scope" value="Bacteria"/>
</dbReference>
<dbReference type="HOGENOM" id="CLU_081974_2_2_6"/>
<dbReference type="OrthoDB" id="5294615at2"/>
<dbReference type="Proteomes" id="UP000000249">
    <property type="component" value="Chromosome 1"/>
</dbReference>
<dbReference type="GO" id="GO:0008124">
    <property type="term" value="F:4-alpha-hydroxytetrahydrobiopterin dehydratase activity"/>
    <property type="evidence" value="ECO:0007669"/>
    <property type="project" value="UniProtKB-UniRule"/>
</dbReference>
<dbReference type="GO" id="GO:0006729">
    <property type="term" value="P:tetrahydrobiopterin biosynthetic process"/>
    <property type="evidence" value="ECO:0007669"/>
    <property type="project" value="InterPro"/>
</dbReference>
<dbReference type="CDD" id="cd00913">
    <property type="entry name" value="PCD_DCoH_subfamily_a"/>
    <property type="match status" value="1"/>
</dbReference>
<dbReference type="FunFam" id="3.30.1360.20:FF:000002">
    <property type="entry name" value="Putative pterin-4-alpha-carbinolamine dehydratase"/>
    <property type="match status" value="1"/>
</dbReference>
<dbReference type="Gene3D" id="3.30.1360.20">
    <property type="entry name" value="Transcriptional coactivator/pterin dehydratase"/>
    <property type="match status" value="1"/>
</dbReference>
<dbReference type="HAMAP" id="MF_00434">
    <property type="entry name" value="Pterin_4_alpha"/>
    <property type="match status" value="1"/>
</dbReference>
<dbReference type="InterPro" id="IPR036428">
    <property type="entry name" value="PCD_sf"/>
</dbReference>
<dbReference type="InterPro" id="IPR050376">
    <property type="entry name" value="Pterin-4-alpha-carb_dehyd"/>
</dbReference>
<dbReference type="InterPro" id="IPR001533">
    <property type="entry name" value="Pterin_deHydtase"/>
</dbReference>
<dbReference type="NCBIfam" id="NF002016">
    <property type="entry name" value="PRK00823.1-1"/>
    <property type="match status" value="1"/>
</dbReference>
<dbReference type="PANTHER" id="PTHR42805">
    <property type="entry name" value="PTERIN-4-ALPHA-CARBINOLAMINE DEHYDRATASE-RELATED"/>
    <property type="match status" value="1"/>
</dbReference>
<dbReference type="PANTHER" id="PTHR42805:SF1">
    <property type="entry name" value="PTERIN-4-ALPHA-CARBINOLAMINE DEHYDRATASE-RELATED"/>
    <property type="match status" value="1"/>
</dbReference>
<dbReference type="Pfam" id="PF01329">
    <property type="entry name" value="Pterin_4a"/>
    <property type="match status" value="1"/>
</dbReference>
<dbReference type="SUPFAM" id="SSF55248">
    <property type="entry name" value="PCD-like"/>
    <property type="match status" value="1"/>
</dbReference>
<gene>
    <name type="primary">phhB</name>
    <name type="ordered locus">VC0395_0408</name>
    <name type="ordered locus">VC395_A0851</name>
</gene>
<feature type="chain" id="PRO_1000072317" description="Putative pterin-4-alpha-carbinolamine dehydratase">
    <location>
        <begin position="1"/>
        <end position="109"/>
    </location>
</feature>
<evidence type="ECO:0000255" key="1">
    <source>
        <dbReference type="HAMAP-Rule" id="MF_00434"/>
    </source>
</evidence>
<keyword id="KW-0456">Lyase</keyword>
<proteinExistence type="inferred from homology"/>
<accession>A5F0J0</accession>
<accession>C3M6C1</accession>
<sequence>MLDELRCEACSAGAIGLTSEEQQQLLSELDGWALIHRDGIAQLEKRYRFKNFKQAWAFSNQIAELAEQEFHHPAILLEWGNVTVTWWSHSIKGLHKNDFICAAKCDALT</sequence>
<reference key="1">
    <citation type="submission" date="2007-03" db="EMBL/GenBank/DDBJ databases">
        <authorList>
            <person name="Heidelberg J."/>
        </authorList>
    </citation>
    <scope>NUCLEOTIDE SEQUENCE [LARGE SCALE GENOMIC DNA]</scope>
    <source>
        <strain>ATCC 39541 / Classical Ogawa 395 / O395</strain>
    </source>
</reference>
<reference key="2">
    <citation type="journal article" date="2008" name="PLoS ONE">
        <title>A recalibrated molecular clock and independent origins for the cholera pandemic clones.</title>
        <authorList>
            <person name="Feng L."/>
            <person name="Reeves P.R."/>
            <person name="Lan R."/>
            <person name="Ren Y."/>
            <person name="Gao C."/>
            <person name="Zhou Z."/>
            <person name="Ren Y."/>
            <person name="Cheng J."/>
            <person name="Wang W."/>
            <person name="Wang J."/>
            <person name="Qian W."/>
            <person name="Li D."/>
            <person name="Wang L."/>
        </authorList>
    </citation>
    <scope>NUCLEOTIDE SEQUENCE [LARGE SCALE GENOMIC DNA]</scope>
    <source>
        <strain>ATCC 39541 / Classical Ogawa 395 / O395</strain>
    </source>
</reference>
<organism>
    <name type="scientific">Vibrio cholerae serotype O1 (strain ATCC 39541 / Classical Ogawa 395 / O395)</name>
    <dbReference type="NCBI Taxonomy" id="345073"/>
    <lineage>
        <taxon>Bacteria</taxon>
        <taxon>Pseudomonadati</taxon>
        <taxon>Pseudomonadota</taxon>
        <taxon>Gammaproteobacteria</taxon>
        <taxon>Vibrionales</taxon>
        <taxon>Vibrionaceae</taxon>
        <taxon>Vibrio</taxon>
    </lineage>
</organism>
<comment type="catalytic activity">
    <reaction evidence="1">
        <text>(4aS,6R)-4a-hydroxy-L-erythro-5,6,7,8-tetrahydrobiopterin = (6R)-L-erythro-6,7-dihydrobiopterin + H2O</text>
        <dbReference type="Rhea" id="RHEA:11920"/>
        <dbReference type="ChEBI" id="CHEBI:15377"/>
        <dbReference type="ChEBI" id="CHEBI:15642"/>
        <dbReference type="ChEBI" id="CHEBI:43120"/>
        <dbReference type="EC" id="4.2.1.96"/>
    </reaction>
</comment>
<comment type="similarity">
    <text evidence="1">Belongs to the pterin-4-alpha-carbinolamine dehydratase family.</text>
</comment>